<feature type="chain" id="PRO_0000388227" description="ATPase get3">
    <location>
        <begin position="1"/>
        <end position="339"/>
    </location>
</feature>
<feature type="active site" evidence="1">
    <location>
        <position position="61"/>
    </location>
</feature>
<feature type="binding site" evidence="1">
    <location>
        <begin position="32"/>
        <end position="39"/>
    </location>
    <ligand>
        <name>ATP</name>
        <dbReference type="ChEBI" id="CHEBI:30616"/>
    </ligand>
</feature>
<feature type="binding site" evidence="1">
    <location>
        <position position="244"/>
    </location>
    <ligand>
        <name>ATP</name>
        <dbReference type="ChEBI" id="CHEBI:30616"/>
    </ligand>
</feature>
<feature type="binding site" evidence="1">
    <location>
        <position position="271"/>
    </location>
    <ligand>
        <name>ATP</name>
        <dbReference type="ChEBI" id="CHEBI:30616"/>
    </ligand>
</feature>
<feature type="binding site" evidence="1">
    <location>
        <position position="282"/>
    </location>
    <ligand>
        <name>Zn(2+)</name>
        <dbReference type="ChEBI" id="CHEBI:29105"/>
        <note>ligand shared between dimeric partners</note>
    </ligand>
</feature>
<feature type="binding site" evidence="1">
    <location>
        <position position="285"/>
    </location>
    <ligand>
        <name>Zn(2+)</name>
        <dbReference type="ChEBI" id="CHEBI:29105"/>
        <note>ligand shared between dimeric partners</note>
    </ligand>
</feature>
<gene>
    <name type="primary">get3</name>
    <name type="ORF">PTRG_02265</name>
</gene>
<organism>
    <name type="scientific">Pyrenophora tritici-repentis (strain Pt-1C-BFP)</name>
    <name type="common">Wheat tan spot fungus</name>
    <name type="synonym">Drechslera tritici-repentis</name>
    <dbReference type="NCBI Taxonomy" id="426418"/>
    <lineage>
        <taxon>Eukaryota</taxon>
        <taxon>Fungi</taxon>
        <taxon>Dikarya</taxon>
        <taxon>Ascomycota</taxon>
        <taxon>Pezizomycotina</taxon>
        <taxon>Dothideomycetes</taxon>
        <taxon>Pleosporomycetidae</taxon>
        <taxon>Pleosporales</taxon>
        <taxon>Pleosporineae</taxon>
        <taxon>Pleosporaceae</taxon>
        <taxon>Pyrenophora</taxon>
    </lineage>
</organism>
<evidence type="ECO:0000255" key="1">
    <source>
        <dbReference type="HAMAP-Rule" id="MF_03112"/>
    </source>
</evidence>
<sequence length="339" mass="37663">MASAALIDADMAPTLQSILDQKTLRWIFVGGKGGVGKTTTSCSLAIQLAKHRKSVLLISTDPAHNLSDAFNQKFGKDARLVNGFDNLSAMEIDPNGSIQDLLASGAEEGQDPMAGLGGMGSMMQDLAFSIPGVDEAMSFAEVLKQVKSMSYEVIIFDTAPTGHTLRFLQFPTVMEKALSKVSQLSRQFGPMLNSFLGASGRLPNGQNMDELIEKMENLRETIGEVNGQFKDADLTTFVCVCIPEFLSLYETERMIQELNSYEIDTHSIVVNQLLFPKQDNPCEQCNARRKMQKKYLDQIEELYDEFNVVKMPLLVEEVRGKEKLEKFSEMLVKPFVPPQ</sequence>
<reference key="1">
    <citation type="journal article" date="2013" name="G3 (Bethesda)">
        <title>Comparative genomics of a plant-pathogenic fungus, Pyrenophora tritici-repentis, reveals transduplication and the impact of repeat elements on pathogenicity and population divergence.</title>
        <authorList>
            <person name="Manning V.A."/>
            <person name="Pandelova I."/>
            <person name="Dhillon B."/>
            <person name="Wilhelm L.J."/>
            <person name="Goodwin S.B."/>
            <person name="Berlin A.M."/>
            <person name="Figueroa M."/>
            <person name="Freitag M."/>
            <person name="Hane J.K."/>
            <person name="Henrissat B."/>
            <person name="Holman W.H."/>
            <person name="Kodira C.D."/>
            <person name="Martin J."/>
            <person name="Oliver R.P."/>
            <person name="Robbertse B."/>
            <person name="Schackwitz W."/>
            <person name="Schwartz D.C."/>
            <person name="Spatafora J.W."/>
            <person name="Turgeon B.G."/>
            <person name="Yandava C."/>
            <person name="Young S."/>
            <person name="Zhou S."/>
            <person name="Zeng Q."/>
            <person name="Grigoriev I.V."/>
            <person name="Ma L.-J."/>
            <person name="Ciuffetti L.M."/>
        </authorList>
    </citation>
    <scope>NUCLEOTIDE SEQUENCE [LARGE SCALE GENOMIC DNA]</scope>
    <source>
        <strain>Pt-1C-BFP</strain>
    </source>
</reference>
<name>GET3_PYRTR</name>
<dbReference type="EC" id="3.6.-.-" evidence="1"/>
<dbReference type="EMBL" id="DS231615">
    <property type="protein sequence ID" value="EDU41703.1"/>
    <property type="molecule type" value="Genomic_DNA"/>
</dbReference>
<dbReference type="RefSeq" id="XP_001932598.1">
    <property type="nucleotide sequence ID" value="XM_001932563.1"/>
</dbReference>
<dbReference type="SMR" id="B2VVF0"/>
<dbReference type="FunCoup" id="B2VVF0">
    <property type="interactions" value="940"/>
</dbReference>
<dbReference type="STRING" id="426418.B2VVF0"/>
<dbReference type="EnsemblFungi" id="EDU41703">
    <property type="protein sequence ID" value="EDU41703"/>
    <property type="gene ID" value="PTRG_02265"/>
</dbReference>
<dbReference type="GeneID" id="6339772"/>
<dbReference type="KEGG" id="ptrr:6339772"/>
<dbReference type="eggNOG" id="KOG2825">
    <property type="taxonomic scope" value="Eukaryota"/>
</dbReference>
<dbReference type="HOGENOM" id="CLU_040761_0_0_1"/>
<dbReference type="InParanoid" id="B2VVF0"/>
<dbReference type="OMA" id="MDAPYEF"/>
<dbReference type="OrthoDB" id="16782at28556"/>
<dbReference type="Proteomes" id="UP000001471">
    <property type="component" value="Unassembled WGS sequence"/>
</dbReference>
<dbReference type="GO" id="GO:0043529">
    <property type="term" value="C:GET complex"/>
    <property type="evidence" value="ECO:0007669"/>
    <property type="project" value="EnsemblFungi"/>
</dbReference>
<dbReference type="GO" id="GO:0005524">
    <property type="term" value="F:ATP binding"/>
    <property type="evidence" value="ECO:0007669"/>
    <property type="project" value="UniProtKB-UniRule"/>
</dbReference>
<dbReference type="GO" id="GO:0016887">
    <property type="term" value="F:ATP hydrolysis activity"/>
    <property type="evidence" value="ECO:0007669"/>
    <property type="project" value="EnsemblFungi"/>
</dbReference>
<dbReference type="GO" id="GO:0005085">
    <property type="term" value="F:guanyl-nucleotide exchange factor activity"/>
    <property type="evidence" value="ECO:0007669"/>
    <property type="project" value="EnsemblFungi"/>
</dbReference>
<dbReference type="GO" id="GO:0042802">
    <property type="term" value="F:identical protein binding"/>
    <property type="evidence" value="ECO:0007669"/>
    <property type="project" value="EnsemblFungi"/>
</dbReference>
<dbReference type="GO" id="GO:0046872">
    <property type="term" value="F:metal ion binding"/>
    <property type="evidence" value="ECO:0007669"/>
    <property type="project" value="UniProtKB-KW"/>
</dbReference>
<dbReference type="GO" id="GO:0044183">
    <property type="term" value="F:protein folding chaperone"/>
    <property type="evidence" value="ECO:0007669"/>
    <property type="project" value="EnsemblFungi"/>
</dbReference>
<dbReference type="GO" id="GO:0051082">
    <property type="term" value="F:unfolded protein binding"/>
    <property type="evidence" value="ECO:0007669"/>
    <property type="project" value="EnsemblFungi"/>
</dbReference>
<dbReference type="GO" id="GO:0034599">
    <property type="term" value="P:cellular response to oxidative stress"/>
    <property type="evidence" value="ECO:0007669"/>
    <property type="project" value="EnsemblFungi"/>
</dbReference>
<dbReference type="GO" id="GO:0000750">
    <property type="term" value="P:pheromone-dependent signal transduction involved in conjugation with cellular fusion"/>
    <property type="evidence" value="ECO:0007669"/>
    <property type="project" value="EnsemblFungi"/>
</dbReference>
<dbReference type="GO" id="GO:0006620">
    <property type="term" value="P:post-translational protein targeting to endoplasmic reticulum membrane"/>
    <property type="evidence" value="ECO:0007669"/>
    <property type="project" value="EnsemblFungi"/>
</dbReference>
<dbReference type="GO" id="GO:0009408">
    <property type="term" value="P:response to heat"/>
    <property type="evidence" value="ECO:0007669"/>
    <property type="project" value="EnsemblFungi"/>
</dbReference>
<dbReference type="GO" id="GO:0010038">
    <property type="term" value="P:response to metal ion"/>
    <property type="evidence" value="ECO:0007669"/>
    <property type="project" value="EnsemblFungi"/>
</dbReference>
<dbReference type="GO" id="GO:0006890">
    <property type="term" value="P:retrograde vesicle-mediated transport, Golgi to endoplasmic reticulum"/>
    <property type="evidence" value="ECO:0007669"/>
    <property type="project" value="EnsemblFungi"/>
</dbReference>
<dbReference type="GO" id="GO:0071816">
    <property type="term" value="P:tail-anchored membrane protein insertion into ER membrane"/>
    <property type="evidence" value="ECO:0007669"/>
    <property type="project" value="EnsemblFungi"/>
</dbReference>
<dbReference type="CDD" id="cd02035">
    <property type="entry name" value="ArsA"/>
    <property type="match status" value="1"/>
</dbReference>
<dbReference type="FunFam" id="3.40.50.300:FF:000235">
    <property type="entry name" value="ATPase ASNA1"/>
    <property type="match status" value="1"/>
</dbReference>
<dbReference type="Gene3D" id="3.40.50.300">
    <property type="entry name" value="P-loop containing nucleotide triphosphate hydrolases"/>
    <property type="match status" value="1"/>
</dbReference>
<dbReference type="HAMAP" id="MF_03112">
    <property type="entry name" value="Asna1_Get3"/>
    <property type="match status" value="1"/>
</dbReference>
<dbReference type="InterPro" id="IPR025723">
    <property type="entry name" value="Anion-transp_ATPase-like_dom"/>
</dbReference>
<dbReference type="InterPro" id="IPR016300">
    <property type="entry name" value="ATPase_ArsA/GET3"/>
</dbReference>
<dbReference type="InterPro" id="IPR027542">
    <property type="entry name" value="ATPase_ArsA/GET3_euk"/>
</dbReference>
<dbReference type="InterPro" id="IPR027417">
    <property type="entry name" value="P-loop_NTPase"/>
</dbReference>
<dbReference type="NCBIfam" id="TIGR00345">
    <property type="entry name" value="GET3_arsA_TRC40"/>
    <property type="match status" value="1"/>
</dbReference>
<dbReference type="PANTHER" id="PTHR10803">
    <property type="entry name" value="ARSENICAL PUMP-DRIVING ATPASE ARSENITE-TRANSLOCATING ATPASE"/>
    <property type="match status" value="1"/>
</dbReference>
<dbReference type="PANTHER" id="PTHR10803:SF3">
    <property type="entry name" value="ATPASE GET3"/>
    <property type="match status" value="1"/>
</dbReference>
<dbReference type="Pfam" id="PF02374">
    <property type="entry name" value="ArsA_ATPase"/>
    <property type="match status" value="1"/>
</dbReference>
<dbReference type="SUPFAM" id="SSF52540">
    <property type="entry name" value="P-loop containing nucleoside triphosphate hydrolases"/>
    <property type="match status" value="1"/>
</dbReference>
<protein>
    <recommendedName>
        <fullName evidence="1">ATPase get3</fullName>
        <ecNumber evidence="1">3.6.-.-</ecNumber>
    </recommendedName>
    <alternativeName>
        <fullName evidence="1">Arsenical pump-driving ATPase</fullName>
    </alternativeName>
    <alternativeName>
        <fullName evidence="1">Arsenite-stimulated ATPase</fullName>
    </alternativeName>
    <alternativeName>
        <fullName evidence="1">Golgi to ER traffic protein 3</fullName>
    </alternativeName>
    <alternativeName>
        <fullName evidence="1">Guided entry of tail-anchored proteins 3</fullName>
    </alternativeName>
</protein>
<proteinExistence type="inferred from homology"/>
<keyword id="KW-0067">ATP-binding</keyword>
<keyword id="KW-0963">Cytoplasm</keyword>
<keyword id="KW-0256">Endoplasmic reticulum</keyword>
<keyword id="KW-0378">Hydrolase</keyword>
<keyword id="KW-0479">Metal-binding</keyword>
<keyword id="KW-0547">Nucleotide-binding</keyword>
<keyword id="KW-1185">Reference proteome</keyword>
<keyword id="KW-0813">Transport</keyword>
<keyword id="KW-0862">Zinc</keyword>
<accession>B2VVF0</accession>
<comment type="function">
    <text evidence="1">ATPase required for the post-translational delivery of tail-anchored (TA) proteins to the endoplasmic reticulum. Recognizes and selectively binds the transmembrane domain of TA proteins in the cytosol. This complex then targets to the endoplasmic reticulum by membrane-bound receptors, where the tail-anchored protein is released for insertion. This process is regulated by ATP binding and hydrolysis. ATP binding drives the homodimer towards the closed dimer state, facilitating recognition of newly synthesized TA membrane proteins. ATP hydrolysis is required for insertion. Subsequently, the homodimer reverts towards the open dimer state, lowering its affinity for the membrane-bound receptor, and returning it to the cytosol to initiate a new round of targeting.</text>
</comment>
<comment type="subunit">
    <text evidence="1">Homodimer.</text>
</comment>
<comment type="subcellular location">
    <subcellularLocation>
        <location evidence="1">Cytoplasm</location>
    </subcellularLocation>
    <subcellularLocation>
        <location evidence="1">Endoplasmic reticulum</location>
    </subcellularLocation>
</comment>
<comment type="similarity">
    <text evidence="1">Belongs to the arsA ATPase family.</text>
</comment>